<protein>
    <recommendedName>
        <fullName evidence="1">Small ribosomal subunit protein uS10</fullName>
    </recommendedName>
    <alternativeName>
        <fullName evidence="2">30S ribosomal protein S10</fullName>
    </alternativeName>
</protein>
<organism>
    <name type="scientific">Staphylococcus aureus (strain Newman)</name>
    <dbReference type="NCBI Taxonomy" id="426430"/>
    <lineage>
        <taxon>Bacteria</taxon>
        <taxon>Bacillati</taxon>
        <taxon>Bacillota</taxon>
        <taxon>Bacilli</taxon>
        <taxon>Bacillales</taxon>
        <taxon>Staphylococcaceae</taxon>
        <taxon>Staphylococcus</taxon>
    </lineage>
</organism>
<reference key="1">
    <citation type="journal article" date="2008" name="J. Bacteriol.">
        <title>Genome sequence of Staphylococcus aureus strain Newman and comparative analysis of staphylococcal genomes: polymorphism and evolution of two major pathogenicity islands.</title>
        <authorList>
            <person name="Baba T."/>
            <person name="Bae T."/>
            <person name="Schneewind O."/>
            <person name="Takeuchi F."/>
            <person name="Hiramatsu K."/>
        </authorList>
    </citation>
    <scope>NUCLEOTIDE SEQUENCE [LARGE SCALE GENOMIC DNA]</scope>
    <source>
        <strain>Newman</strain>
    </source>
</reference>
<name>RS10_STAAE</name>
<feature type="chain" id="PRO_1000072467" description="Small ribosomal subunit protein uS10">
    <location>
        <begin position="1"/>
        <end position="102"/>
    </location>
</feature>
<sequence>MAKQKIRIRLKAYDHRVIDQSAEKIVETAKRSGADVSGPIPLPTEKSVYTIIRAVHKYKDSREQFEQRTHKRLIDIVNPTPKTVDALMGLNLPSGVDIEIKL</sequence>
<keyword id="KW-0687">Ribonucleoprotein</keyword>
<keyword id="KW-0689">Ribosomal protein</keyword>
<evidence type="ECO:0000255" key="1">
    <source>
        <dbReference type="HAMAP-Rule" id="MF_00508"/>
    </source>
</evidence>
<evidence type="ECO:0000305" key="2"/>
<gene>
    <name evidence="1" type="primary">rpsJ</name>
    <name type="ordered locus">NWMN_2153</name>
</gene>
<proteinExistence type="inferred from homology"/>
<dbReference type="EMBL" id="AP009351">
    <property type="protein sequence ID" value="BAF68425.1"/>
    <property type="molecule type" value="Genomic_DNA"/>
</dbReference>
<dbReference type="RefSeq" id="WP_001118667.1">
    <property type="nucleotide sequence ID" value="NZ_JBBIAE010000006.1"/>
</dbReference>
<dbReference type="SMR" id="A6QJ93"/>
<dbReference type="GeneID" id="98346563"/>
<dbReference type="KEGG" id="sae:NWMN_2153"/>
<dbReference type="HOGENOM" id="CLU_122625_1_3_9"/>
<dbReference type="Proteomes" id="UP000006386">
    <property type="component" value="Chromosome"/>
</dbReference>
<dbReference type="GO" id="GO:1990904">
    <property type="term" value="C:ribonucleoprotein complex"/>
    <property type="evidence" value="ECO:0007669"/>
    <property type="project" value="UniProtKB-KW"/>
</dbReference>
<dbReference type="GO" id="GO:0005840">
    <property type="term" value="C:ribosome"/>
    <property type="evidence" value="ECO:0007669"/>
    <property type="project" value="UniProtKB-KW"/>
</dbReference>
<dbReference type="GO" id="GO:0003735">
    <property type="term" value="F:structural constituent of ribosome"/>
    <property type="evidence" value="ECO:0007669"/>
    <property type="project" value="InterPro"/>
</dbReference>
<dbReference type="GO" id="GO:0000049">
    <property type="term" value="F:tRNA binding"/>
    <property type="evidence" value="ECO:0007669"/>
    <property type="project" value="UniProtKB-UniRule"/>
</dbReference>
<dbReference type="GO" id="GO:0006412">
    <property type="term" value="P:translation"/>
    <property type="evidence" value="ECO:0007669"/>
    <property type="project" value="UniProtKB-UniRule"/>
</dbReference>
<dbReference type="FunFam" id="3.30.70.600:FF:000001">
    <property type="entry name" value="30S ribosomal protein S10"/>
    <property type="match status" value="1"/>
</dbReference>
<dbReference type="Gene3D" id="3.30.70.600">
    <property type="entry name" value="Ribosomal protein S10 domain"/>
    <property type="match status" value="1"/>
</dbReference>
<dbReference type="HAMAP" id="MF_00508">
    <property type="entry name" value="Ribosomal_uS10"/>
    <property type="match status" value="1"/>
</dbReference>
<dbReference type="InterPro" id="IPR001848">
    <property type="entry name" value="Ribosomal_uS10"/>
</dbReference>
<dbReference type="InterPro" id="IPR018268">
    <property type="entry name" value="Ribosomal_uS10_CS"/>
</dbReference>
<dbReference type="InterPro" id="IPR027486">
    <property type="entry name" value="Ribosomal_uS10_dom"/>
</dbReference>
<dbReference type="InterPro" id="IPR036838">
    <property type="entry name" value="Ribosomal_uS10_dom_sf"/>
</dbReference>
<dbReference type="NCBIfam" id="NF001861">
    <property type="entry name" value="PRK00596.1"/>
    <property type="match status" value="1"/>
</dbReference>
<dbReference type="NCBIfam" id="TIGR01049">
    <property type="entry name" value="rpsJ_bact"/>
    <property type="match status" value="1"/>
</dbReference>
<dbReference type="PANTHER" id="PTHR11700">
    <property type="entry name" value="30S RIBOSOMAL PROTEIN S10 FAMILY MEMBER"/>
    <property type="match status" value="1"/>
</dbReference>
<dbReference type="Pfam" id="PF00338">
    <property type="entry name" value="Ribosomal_S10"/>
    <property type="match status" value="1"/>
</dbReference>
<dbReference type="PRINTS" id="PR00971">
    <property type="entry name" value="RIBOSOMALS10"/>
</dbReference>
<dbReference type="SMART" id="SM01403">
    <property type="entry name" value="Ribosomal_S10"/>
    <property type="match status" value="1"/>
</dbReference>
<dbReference type="SUPFAM" id="SSF54999">
    <property type="entry name" value="Ribosomal protein S10"/>
    <property type="match status" value="1"/>
</dbReference>
<dbReference type="PROSITE" id="PS00361">
    <property type="entry name" value="RIBOSOMAL_S10"/>
    <property type="match status" value="1"/>
</dbReference>
<comment type="function">
    <text evidence="1">Involved in the binding of tRNA to the ribosomes.</text>
</comment>
<comment type="subunit">
    <text evidence="1">Part of the 30S ribosomal subunit.</text>
</comment>
<comment type="similarity">
    <text evidence="1">Belongs to the universal ribosomal protein uS10 family.</text>
</comment>
<accession>A6QJ93</accession>